<organism>
    <name type="scientific">Rattus norvegicus</name>
    <name type="common">Rat</name>
    <dbReference type="NCBI Taxonomy" id="10116"/>
    <lineage>
        <taxon>Eukaryota</taxon>
        <taxon>Metazoa</taxon>
        <taxon>Chordata</taxon>
        <taxon>Craniata</taxon>
        <taxon>Vertebrata</taxon>
        <taxon>Euteleostomi</taxon>
        <taxon>Mammalia</taxon>
        <taxon>Eutheria</taxon>
        <taxon>Euarchontoglires</taxon>
        <taxon>Glires</taxon>
        <taxon>Rodentia</taxon>
        <taxon>Myomorpha</taxon>
        <taxon>Muroidea</taxon>
        <taxon>Muridae</taxon>
        <taxon>Murinae</taxon>
        <taxon>Rattus</taxon>
    </lineage>
</organism>
<gene>
    <name type="primary">Slc9a5</name>
    <name type="synonym">Nhe5</name>
</gene>
<accession>Q9Z0X2</accession>
<accession>G3V9Y4</accession>
<proteinExistence type="evidence at protein level"/>
<feature type="chain" id="PRO_0000052361" description="Sodium/hydrogen exchanger 5">
    <location>
        <begin position="1"/>
        <end position="898"/>
    </location>
</feature>
<feature type="topological domain" description="Cytoplasmic" evidence="5">
    <location>
        <begin position="1"/>
        <end position="3"/>
    </location>
</feature>
<feature type="transmembrane region" description="Helical; Name=1" evidence="2">
    <location>
        <begin position="4"/>
        <end position="24"/>
    </location>
</feature>
<feature type="topological domain" description="Extracellular" evidence="5">
    <location>
        <begin position="25"/>
        <end position="47"/>
    </location>
</feature>
<feature type="transmembrane region" description="Helical; Name=2" evidence="2">
    <location>
        <begin position="48"/>
        <end position="68"/>
    </location>
</feature>
<feature type="topological domain" description="Cytoplasmic" evidence="5">
    <location>
        <begin position="69"/>
        <end position="75"/>
    </location>
</feature>
<feature type="transmembrane region" description="Helical; Name=3" evidence="2">
    <location>
        <begin position="76"/>
        <end position="96"/>
    </location>
</feature>
<feature type="topological domain" description="Extracellular" evidence="5">
    <location>
        <begin position="97"/>
        <end position="136"/>
    </location>
</feature>
<feature type="transmembrane region" description="Helical; Name=4" evidence="2">
    <location>
        <begin position="137"/>
        <end position="157"/>
    </location>
</feature>
<feature type="topological domain" description="Cytoplasmic" evidence="5">
    <location>
        <begin position="158"/>
        <end position="175"/>
    </location>
</feature>
<feature type="transmembrane region" description="Helical; Name=5" evidence="2">
    <location>
        <begin position="176"/>
        <end position="196"/>
    </location>
</feature>
<feature type="topological domain" description="Extracellular" evidence="5">
    <location>
        <begin position="197"/>
        <end position="202"/>
    </location>
</feature>
<feature type="transmembrane region" description="Helical; Name=6" evidence="2">
    <location>
        <begin position="203"/>
        <end position="223"/>
    </location>
</feature>
<feature type="topological domain" description="Cytoplasmic" evidence="5">
    <location>
        <begin position="224"/>
        <end position="248"/>
    </location>
</feature>
<feature type="transmembrane region" description="Helical; Name=7" evidence="2">
    <location>
        <begin position="249"/>
        <end position="269"/>
    </location>
</feature>
<feature type="topological domain" description="Extracellular" evidence="5">
    <location>
        <begin position="270"/>
        <end position="278"/>
    </location>
</feature>
<feature type="transmembrane region" description="Helical; Name=8" evidence="2">
    <location>
        <begin position="279"/>
        <end position="299"/>
    </location>
</feature>
<feature type="topological domain" description="Cytoplasmic" evidence="5">
    <location>
        <begin position="300"/>
        <end position="333"/>
    </location>
</feature>
<feature type="transmembrane region" description="Helical; Name=9" evidence="2">
    <location>
        <begin position="334"/>
        <end position="354"/>
    </location>
</feature>
<feature type="topological domain" description="Extracellular" evidence="5">
    <location>
        <begin position="355"/>
        <end position="362"/>
    </location>
</feature>
<feature type="transmembrane region" description="Helical; Name=10" evidence="2">
    <location>
        <begin position="363"/>
        <end position="383"/>
    </location>
</feature>
<feature type="topological domain" description="Cytoplasmic" evidence="5">
    <location>
        <begin position="384"/>
        <end position="400"/>
    </location>
</feature>
<feature type="transmembrane region" description="Helical; Name=11" evidence="2">
    <location>
        <begin position="401"/>
        <end position="421"/>
    </location>
</feature>
<feature type="topological domain" description="Extracellular" evidence="5">
    <location>
        <begin position="422"/>
        <end position="430"/>
    </location>
</feature>
<feature type="transmembrane region" description="Helical; Name=12" evidence="2">
    <location>
        <begin position="431"/>
        <end position="451"/>
    </location>
</feature>
<feature type="topological domain" description="Cytoplasmic" evidence="5">
    <location>
        <begin position="452"/>
        <end position="898"/>
    </location>
</feature>
<feature type="region of interest" description="Disordered" evidence="3">
    <location>
        <begin position="660"/>
        <end position="692"/>
    </location>
</feature>
<feature type="region of interest" description="Disordered" evidence="3">
    <location>
        <begin position="801"/>
        <end position="888"/>
    </location>
</feature>
<feature type="compositionally biased region" description="Basic residues" evidence="3">
    <location>
        <begin position="662"/>
        <end position="674"/>
    </location>
</feature>
<feature type="compositionally biased region" description="Polar residues" evidence="3">
    <location>
        <begin position="856"/>
        <end position="867"/>
    </location>
</feature>
<feature type="glycosylation site" description="N-linked (GlcNAc...) asparagine" evidence="2">
    <location>
        <position position="201"/>
    </location>
</feature>
<feature type="sequence conflict" description="In Ref. 1; AAD16413." evidence="5" ref="1">
    <original>V</original>
    <variation>A</variation>
    <location>
        <position position="220"/>
    </location>
</feature>
<feature type="sequence conflict" description="In Ref. 1; AAD16413." evidence="5" ref="1">
    <original>V</original>
    <variation>A</variation>
    <location>
        <position position="394"/>
    </location>
</feature>
<sequence length="898" mass="99108">MLRVALLLLPGLPLAGVGATEEPTQEPGPLGEPPGLALFRWQWHEVEAPYLVALWILVASLAKIVFHLSRKVTSLVPESCLLILLGLALGGIVLAVAKKAEYQLEPGTFFLFLLPPIVLDSGYFMPSRLFFDNLGAILTYAVVGTLWNAFTTGVALWGLQQAGLVAPRVQAGLLDFLLFGSLISAVDPVAVLAVFEEVHVNETLFIIVFGESLLNDAVTVVLYKVCNSFVEMGSANVQATDYLKGVASLFVVSLGGAAVGLVFAFLLALTTRFTKRVRIIEPLLVFLLAYAAYLTAEMASLSAILAVTMCGLGCKKYVEANISHKSRTAVKYTMKTLASSAETVIFMLLGISAVDSSKWAWDSGLVLGTLFFILFFRALGVVLQTWVLNQFRLVPLDKIDQVVMSYGGLRGAVAFALVILLDRTKVPAKDYFVATTIVVVFFTVIVQGLTIKPLVKWLRVKRSDYHKPTLNQELHEHTFDHILAAVEDVVGHHGYHYWRDRWEQFDKKYLSQLLMRRSAYRIRDQIWDVYYRLNIRDAISFVDQGGHVLSSAGLTLPSMPSRNSVAETSVTNLLRESGSGACLDLQVIDTVRSGRDREDAVMHHLLCGGLYKPRRRYKASCSRHFISEDAQERQDKEVFQQNMKRRLESFKSTKHNICFTKSKPRPRKTGHKKKDGVANPEATNGKPPRDLGFQDTAAVILTVESEEEEESESSETEKEDDEGIIFVARATSEVLQEGKVSGSLEVCPSPRIIPPSPTCAEKELPWKSGQGDLAVYVSSETTKIVPVDMQTGWNQSISSLESLASPPCTQPPTLTRLPPHPLVPEEPQVPLDLSSDPRSSFAFPPSLAKAGRSRSESSADIPQQQELQPLMGHKDHTHLSPGPANSHWCIQFNRGGRL</sequence>
<name>SL9A5_RAT</name>
<keyword id="KW-0050">Antiport</keyword>
<keyword id="KW-0965">Cell junction</keyword>
<keyword id="KW-1003">Cell membrane</keyword>
<keyword id="KW-0966">Cell projection</keyword>
<keyword id="KW-0967">Endosome</keyword>
<keyword id="KW-0325">Glycoprotein</keyword>
<keyword id="KW-0406">Ion transport</keyword>
<keyword id="KW-0472">Membrane</keyword>
<keyword id="KW-0597">Phosphoprotein</keyword>
<keyword id="KW-0628">Postsynaptic cell membrane</keyword>
<keyword id="KW-1185">Reference proteome</keyword>
<keyword id="KW-0915">Sodium</keyword>
<keyword id="KW-0739">Sodium transport</keyword>
<keyword id="KW-0770">Synapse</keyword>
<keyword id="KW-0812">Transmembrane</keyword>
<keyword id="KW-1133">Transmembrane helix</keyword>
<keyword id="KW-0813">Transport</keyword>
<protein>
    <recommendedName>
        <fullName>Sodium/hydrogen exchanger 5</fullName>
    </recommendedName>
    <alternativeName>
        <fullName>Na(+)/H(+) exchanger 5</fullName>
        <shortName>NHE-5</shortName>
    </alternativeName>
    <alternativeName>
        <fullName>Solute carrier family 9 member 5</fullName>
    </alternativeName>
</protein>
<comment type="function">
    <text evidence="1 4">Plasma membrane Na(+)/H(+) antiporter. Mediates the electroneutral exchange of intracellular H(+) ions for extracellular Na(+) in 1:1 stoichiometry. Responsible for regulating intracellular pH homeostasis, in particular in neural tissues (PubMed:9933642). Acts as a negative regulator of dendritic spine growth. Plays a role in postsynaptic remodeling and signaling. Can also contribute to organellar pH regulation, with consequences for receptor tyrosine kinase trafficking (By similarity).</text>
</comment>
<comment type="catalytic activity">
    <reaction evidence="4">
        <text>Na(+)(in) + H(+)(out) = Na(+)(out) + H(+)(in)</text>
        <dbReference type="Rhea" id="RHEA:29419"/>
        <dbReference type="ChEBI" id="CHEBI:15378"/>
        <dbReference type="ChEBI" id="CHEBI:29101"/>
    </reaction>
    <physiologicalReaction direction="right-to-left" evidence="6">
        <dbReference type="Rhea" id="RHEA:29421"/>
    </physiologicalReaction>
</comment>
<comment type="subunit">
    <text evidence="1">Interacts with CHP1 and CHP2 (PubMed:12576672). Interacts with ARRB2; facilitates the endocytosis of SLC9A5 from the plasma membrane (By similarity). Interacts with RACK1; this interaction positively regulates SLC9A5 activity and promotes SLC9A5 localization to focal adhesions (By similarity). Interacts with SCAMP2; this interaction regulates SLC9A5 cell-surface targeting and SLC9A5 activity (By similarity).</text>
</comment>
<comment type="subcellular location">
    <subcellularLocation>
        <location evidence="1">Cell membrane</location>
        <topology evidence="2">Multi-pass membrane protein</topology>
    </subcellularLocation>
    <subcellularLocation>
        <location evidence="1">Recycling endosome membrane</location>
        <topology evidence="2">Multi-pass membrane protein</topology>
    </subcellularLocation>
    <subcellularLocation>
        <location evidence="1">Cell projection</location>
        <location evidence="1">Dendritic spine membrane</location>
        <topology evidence="2">Multi-pass membrane protein</topology>
    </subcellularLocation>
    <subcellularLocation>
        <location evidence="1">Synaptic cell membrane</location>
        <topology>Multi-pass membrane protein</topology>
    </subcellularLocation>
    <subcellularLocation>
        <location evidence="1">Cell junction</location>
        <location evidence="1">Focal adhesion</location>
    </subcellularLocation>
    <text evidence="1">Cycles between recycling endosome and plasma membrane in response to diverse stimuli. Its internalization is clathrin- and beta-arrestin dependent and its plasma membrane insertion from the recycling endosomes requires phosphoinositide 3-kinase (PIK3CA) and SCAMP2.</text>
</comment>
<comment type="tissue specificity">
    <text evidence="4">Highly expressed in brain. Strongly expressed in the dentate gyrus.</text>
</comment>
<comment type="PTM">
    <text evidence="1">Phosphorylated by PRKAA2; promotes its accumulation at the cell surface. Phosphorylated by CSNK2A1 in a manner favoring its beta-arrestin binding and endocytosis.</text>
</comment>
<comment type="similarity">
    <text evidence="5">Belongs to the monovalent cation:proton antiporter 1 (CPA1) transporter (TC 2.A.36) family.</text>
</comment>
<evidence type="ECO:0000250" key="1">
    <source>
        <dbReference type="UniProtKB" id="Q14940"/>
    </source>
</evidence>
<evidence type="ECO:0000255" key="2"/>
<evidence type="ECO:0000256" key="3">
    <source>
        <dbReference type="SAM" id="MobiDB-lite"/>
    </source>
</evidence>
<evidence type="ECO:0000269" key="4">
    <source>
    </source>
</evidence>
<evidence type="ECO:0000305" key="5"/>
<evidence type="ECO:0000305" key="6">
    <source>
    </source>
</evidence>
<reference key="1">
    <citation type="journal article" date="1999" name="J. Biol. Chem.">
        <title>Molecular cloning and functional expression of a rat Na+/H+ exchanger (NHE5) highly expressed in brain.</title>
        <authorList>
            <person name="Attaphitaya S."/>
            <person name="Park K."/>
            <person name="Melvin J.E."/>
        </authorList>
    </citation>
    <scope>NUCLEOTIDE SEQUENCE [MRNA]</scope>
    <scope>TISSUE SPECIFICITY</scope>
    <scope>FUNCTION</scope>
    <scope>TRANSPORTER ACTIVITY</scope>
    <source>
        <strain>Wistar</strain>
    </source>
</reference>
<reference key="2">
    <citation type="journal article" date="2004" name="Nature">
        <title>Genome sequence of the Brown Norway rat yields insights into mammalian evolution.</title>
        <authorList>
            <person name="Gibbs R.A."/>
            <person name="Weinstock G.M."/>
            <person name="Metzker M.L."/>
            <person name="Muzny D.M."/>
            <person name="Sodergren E.J."/>
            <person name="Scherer S."/>
            <person name="Scott G."/>
            <person name="Steffen D."/>
            <person name="Worley K.C."/>
            <person name="Burch P.E."/>
            <person name="Okwuonu G."/>
            <person name="Hines S."/>
            <person name="Lewis L."/>
            <person name="Deramo C."/>
            <person name="Delgado O."/>
            <person name="Dugan-Rocha S."/>
            <person name="Miner G."/>
            <person name="Morgan M."/>
            <person name="Hawes A."/>
            <person name="Gill R."/>
            <person name="Holt R.A."/>
            <person name="Adams M.D."/>
            <person name="Amanatides P.G."/>
            <person name="Baden-Tillson H."/>
            <person name="Barnstead M."/>
            <person name="Chin S."/>
            <person name="Evans C.A."/>
            <person name="Ferriera S."/>
            <person name="Fosler C."/>
            <person name="Glodek A."/>
            <person name="Gu Z."/>
            <person name="Jennings D."/>
            <person name="Kraft C.L."/>
            <person name="Nguyen T."/>
            <person name="Pfannkoch C.M."/>
            <person name="Sitter C."/>
            <person name="Sutton G.G."/>
            <person name="Venter J.C."/>
            <person name="Woodage T."/>
            <person name="Smith D."/>
            <person name="Lee H.-M."/>
            <person name="Gustafson E."/>
            <person name="Cahill P."/>
            <person name="Kana A."/>
            <person name="Doucette-Stamm L."/>
            <person name="Weinstock K."/>
            <person name="Fechtel K."/>
            <person name="Weiss R.B."/>
            <person name="Dunn D.M."/>
            <person name="Green E.D."/>
            <person name="Blakesley R.W."/>
            <person name="Bouffard G.G."/>
            <person name="De Jong P.J."/>
            <person name="Osoegawa K."/>
            <person name="Zhu B."/>
            <person name="Marra M."/>
            <person name="Schein J."/>
            <person name="Bosdet I."/>
            <person name="Fjell C."/>
            <person name="Jones S."/>
            <person name="Krzywinski M."/>
            <person name="Mathewson C."/>
            <person name="Siddiqui A."/>
            <person name="Wye N."/>
            <person name="McPherson J."/>
            <person name="Zhao S."/>
            <person name="Fraser C.M."/>
            <person name="Shetty J."/>
            <person name="Shatsman S."/>
            <person name="Geer K."/>
            <person name="Chen Y."/>
            <person name="Abramzon S."/>
            <person name="Nierman W.C."/>
            <person name="Havlak P.H."/>
            <person name="Chen R."/>
            <person name="Durbin K.J."/>
            <person name="Egan A."/>
            <person name="Ren Y."/>
            <person name="Song X.-Z."/>
            <person name="Li B."/>
            <person name="Liu Y."/>
            <person name="Qin X."/>
            <person name="Cawley S."/>
            <person name="Cooney A.J."/>
            <person name="D'Souza L.M."/>
            <person name="Martin K."/>
            <person name="Wu J.Q."/>
            <person name="Gonzalez-Garay M.L."/>
            <person name="Jackson A.R."/>
            <person name="Kalafus K.J."/>
            <person name="McLeod M.P."/>
            <person name="Milosavljevic A."/>
            <person name="Virk D."/>
            <person name="Volkov A."/>
            <person name="Wheeler D.A."/>
            <person name="Zhang Z."/>
            <person name="Bailey J.A."/>
            <person name="Eichler E.E."/>
            <person name="Tuzun E."/>
            <person name="Birney E."/>
            <person name="Mongin E."/>
            <person name="Ureta-Vidal A."/>
            <person name="Woodwark C."/>
            <person name="Zdobnov E."/>
            <person name="Bork P."/>
            <person name="Suyama M."/>
            <person name="Torrents D."/>
            <person name="Alexandersson M."/>
            <person name="Trask B.J."/>
            <person name="Young J.M."/>
            <person name="Huang H."/>
            <person name="Wang H."/>
            <person name="Xing H."/>
            <person name="Daniels S."/>
            <person name="Gietzen D."/>
            <person name="Schmidt J."/>
            <person name="Stevens K."/>
            <person name="Vitt U."/>
            <person name="Wingrove J."/>
            <person name="Camara F."/>
            <person name="Mar Alba M."/>
            <person name="Abril J.F."/>
            <person name="Guigo R."/>
            <person name="Smit A."/>
            <person name="Dubchak I."/>
            <person name="Rubin E.M."/>
            <person name="Couronne O."/>
            <person name="Poliakov A."/>
            <person name="Huebner N."/>
            <person name="Ganten D."/>
            <person name="Goesele C."/>
            <person name="Hummel O."/>
            <person name="Kreitler T."/>
            <person name="Lee Y.-A."/>
            <person name="Monti J."/>
            <person name="Schulz H."/>
            <person name="Zimdahl H."/>
            <person name="Himmelbauer H."/>
            <person name="Lehrach H."/>
            <person name="Jacob H.J."/>
            <person name="Bromberg S."/>
            <person name="Gullings-Handley J."/>
            <person name="Jensen-Seaman M.I."/>
            <person name="Kwitek A.E."/>
            <person name="Lazar J."/>
            <person name="Pasko D."/>
            <person name="Tonellato P.J."/>
            <person name="Twigger S."/>
            <person name="Ponting C.P."/>
            <person name="Duarte J.M."/>
            <person name="Rice S."/>
            <person name="Goodstadt L."/>
            <person name="Beatson S.A."/>
            <person name="Emes R.D."/>
            <person name="Winter E.E."/>
            <person name="Webber C."/>
            <person name="Brandt P."/>
            <person name="Nyakatura G."/>
            <person name="Adetobi M."/>
            <person name="Chiaromonte F."/>
            <person name="Elnitski L."/>
            <person name="Eswara P."/>
            <person name="Hardison R.C."/>
            <person name="Hou M."/>
            <person name="Kolbe D."/>
            <person name="Makova K."/>
            <person name="Miller W."/>
            <person name="Nekrutenko A."/>
            <person name="Riemer C."/>
            <person name="Schwartz S."/>
            <person name="Taylor J."/>
            <person name="Yang S."/>
            <person name="Zhang Y."/>
            <person name="Lindpaintner K."/>
            <person name="Andrews T.D."/>
            <person name="Caccamo M."/>
            <person name="Clamp M."/>
            <person name="Clarke L."/>
            <person name="Curwen V."/>
            <person name="Durbin R.M."/>
            <person name="Eyras E."/>
            <person name="Searle S.M."/>
            <person name="Cooper G.M."/>
            <person name="Batzoglou S."/>
            <person name="Brudno M."/>
            <person name="Sidow A."/>
            <person name="Stone E.A."/>
            <person name="Payseur B.A."/>
            <person name="Bourque G."/>
            <person name="Lopez-Otin C."/>
            <person name="Puente X.S."/>
            <person name="Chakrabarti K."/>
            <person name="Chatterji S."/>
            <person name="Dewey C."/>
            <person name="Pachter L."/>
            <person name="Bray N."/>
            <person name="Yap V.B."/>
            <person name="Caspi A."/>
            <person name="Tesler G."/>
            <person name="Pevzner P.A."/>
            <person name="Haussler D."/>
            <person name="Roskin K.M."/>
            <person name="Baertsch R."/>
            <person name="Clawson H."/>
            <person name="Furey T.S."/>
            <person name="Hinrichs A.S."/>
            <person name="Karolchik D."/>
            <person name="Kent W.J."/>
            <person name="Rosenbloom K.R."/>
            <person name="Trumbower H."/>
            <person name="Weirauch M."/>
            <person name="Cooper D.N."/>
            <person name="Stenson P.D."/>
            <person name="Ma B."/>
            <person name="Brent M."/>
            <person name="Arumugam M."/>
            <person name="Shteynberg D."/>
            <person name="Copley R.R."/>
            <person name="Taylor M.S."/>
            <person name="Riethman H."/>
            <person name="Mudunuri U."/>
            <person name="Peterson J."/>
            <person name="Guyer M."/>
            <person name="Felsenfeld A."/>
            <person name="Old S."/>
            <person name="Mockrin S."/>
            <person name="Collins F.S."/>
        </authorList>
    </citation>
    <scope>NUCLEOTIDE SEQUENCE [LARGE SCALE GENOMIC DNA]</scope>
    <source>
        <strain>Brown Norway</strain>
    </source>
</reference>
<reference key="3">
    <citation type="submission" date="2005-07" db="EMBL/GenBank/DDBJ databases">
        <authorList>
            <person name="Mural R.J."/>
            <person name="Adams M.D."/>
            <person name="Myers E.W."/>
            <person name="Smith H.O."/>
            <person name="Venter J.C."/>
        </authorList>
    </citation>
    <scope>NUCLEOTIDE SEQUENCE [LARGE SCALE GENOMIC DNA]</scope>
</reference>
<reference key="4">
    <citation type="journal article" date="2003" name="Biol. Pharm. Bull.">
        <title>Calcineurin homologous protein isoform 2 (CHP2), Na+/H+ exchangers-binding protein, is expressed in intestinal epithelium.</title>
        <authorList>
            <person name="Inoue H."/>
            <person name="Nakamura Y."/>
            <person name="Nagita M."/>
            <person name="Takai T."/>
            <person name="Masuda M."/>
            <person name="Nakamura N."/>
            <person name="Kanazawa H."/>
        </authorList>
    </citation>
    <scope>INTERACTION WITH CHP1 AND CHP2</scope>
</reference>
<dbReference type="EMBL" id="AF100172">
    <property type="protein sequence ID" value="AAD16413.1"/>
    <property type="molecule type" value="mRNA"/>
</dbReference>
<dbReference type="EMBL" id="CH473972">
    <property type="protein sequence ID" value="EDL92373.1"/>
    <property type="molecule type" value="Genomic_DNA"/>
</dbReference>
<dbReference type="RefSeq" id="NP_620213.1">
    <property type="nucleotide sequence ID" value="NM_138858.1"/>
</dbReference>
<dbReference type="SMR" id="Q9Z0X2"/>
<dbReference type="FunCoup" id="Q9Z0X2">
    <property type="interactions" value="639"/>
</dbReference>
<dbReference type="IntAct" id="Q9Z0X2">
    <property type="interactions" value="2"/>
</dbReference>
<dbReference type="STRING" id="10116.ENSRNOP00000063061"/>
<dbReference type="GlyCosmos" id="Q9Z0X2">
    <property type="glycosylation" value="2 sites, No reported glycans"/>
</dbReference>
<dbReference type="GlyGen" id="Q9Z0X2">
    <property type="glycosylation" value="2 sites"/>
</dbReference>
<dbReference type="PhosphoSitePlus" id="Q9Z0X2"/>
<dbReference type="PaxDb" id="10116-ENSRNOP00000063061"/>
<dbReference type="PRIDE" id="G3V9Y4"/>
<dbReference type="Ensembl" id="ENSRNOT00000068299.2">
    <property type="protein sequence ID" value="ENSRNOP00000063061.1"/>
    <property type="gene ID" value="ENSRNOG00000028844.5"/>
</dbReference>
<dbReference type="GeneID" id="192215"/>
<dbReference type="KEGG" id="rno:192215"/>
<dbReference type="UCSC" id="RGD:620473">
    <property type="organism name" value="rat"/>
</dbReference>
<dbReference type="AGR" id="RGD:620473"/>
<dbReference type="CTD" id="6553"/>
<dbReference type="RGD" id="620473">
    <property type="gene designation" value="Slc9a5"/>
</dbReference>
<dbReference type="eggNOG" id="KOG1966">
    <property type="taxonomic scope" value="Eukaryota"/>
</dbReference>
<dbReference type="GeneTree" id="ENSGT00940000159190"/>
<dbReference type="HOGENOM" id="CLU_005912_4_2_1"/>
<dbReference type="InParanoid" id="Q9Z0X2"/>
<dbReference type="OMA" id="AMHHLLC"/>
<dbReference type="OrthoDB" id="196264at2759"/>
<dbReference type="Reactome" id="R-RNO-425986">
    <property type="pathway name" value="Sodium/Proton exchangers"/>
</dbReference>
<dbReference type="PRO" id="PR:Q9Z0X2"/>
<dbReference type="Proteomes" id="UP000002494">
    <property type="component" value="Chromosome 19"/>
</dbReference>
<dbReference type="Proteomes" id="UP000234681">
    <property type="component" value="Chromosome 19"/>
</dbReference>
<dbReference type="Bgee" id="ENSRNOG00000028844">
    <property type="expression patterns" value="Expressed in cerebellum and 16 other cell types or tissues"/>
</dbReference>
<dbReference type="GO" id="GO:0032591">
    <property type="term" value="C:dendritic spine membrane"/>
    <property type="evidence" value="ECO:0007669"/>
    <property type="project" value="UniProtKB-SubCell"/>
</dbReference>
<dbReference type="GO" id="GO:0005925">
    <property type="term" value="C:focal adhesion"/>
    <property type="evidence" value="ECO:0000250"/>
    <property type="project" value="UniProtKB"/>
</dbReference>
<dbReference type="GO" id="GO:0044309">
    <property type="term" value="C:neuron spine"/>
    <property type="evidence" value="ECO:0000250"/>
    <property type="project" value="UniProtKB"/>
</dbReference>
<dbReference type="GO" id="GO:0005886">
    <property type="term" value="C:plasma membrane"/>
    <property type="evidence" value="ECO:0000250"/>
    <property type="project" value="UniProtKB"/>
</dbReference>
<dbReference type="GO" id="GO:0045211">
    <property type="term" value="C:postsynaptic membrane"/>
    <property type="evidence" value="ECO:0007669"/>
    <property type="project" value="UniProtKB-KW"/>
</dbReference>
<dbReference type="GO" id="GO:0055038">
    <property type="term" value="C:recycling endosome membrane"/>
    <property type="evidence" value="ECO:0000250"/>
    <property type="project" value="UniProtKB"/>
</dbReference>
<dbReference type="GO" id="GO:0045202">
    <property type="term" value="C:synapse"/>
    <property type="evidence" value="ECO:0000250"/>
    <property type="project" value="UniProtKB"/>
</dbReference>
<dbReference type="GO" id="GO:1990763">
    <property type="term" value="F:arrestin family protein binding"/>
    <property type="evidence" value="ECO:0000266"/>
    <property type="project" value="RGD"/>
</dbReference>
<dbReference type="GO" id="GO:0015386">
    <property type="term" value="F:potassium:proton antiporter activity"/>
    <property type="evidence" value="ECO:0000318"/>
    <property type="project" value="GO_Central"/>
</dbReference>
<dbReference type="GO" id="GO:0015385">
    <property type="term" value="F:sodium:proton antiporter activity"/>
    <property type="evidence" value="ECO:0000314"/>
    <property type="project" value="RGD"/>
</dbReference>
<dbReference type="GO" id="GO:0071805">
    <property type="term" value="P:potassium ion transmembrane transport"/>
    <property type="evidence" value="ECO:0000318"/>
    <property type="project" value="GO_Central"/>
</dbReference>
<dbReference type="GO" id="GO:1902600">
    <property type="term" value="P:proton transmembrane transport"/>
    <property type="evidence" value="ECO:0000314"/>
    <property type="project" value="RGD"/>
</dbReference>
<dbReference type="GO" id="GO:0051453">
    <property type="term" value="P:regulation of intracellular pH"/>
    <property type="evidence" value="ECO:0000250"/>
    <property type="project" value="UniProtKB"/>
</dbReference>
<dbReference type="GO" id="GO:0098719">
    <property type="term" value="P:sodium ion import across plasma membrane"/>
    <property type="evidence" value="ECO:0000318"/>
    <property type="project" value="GO_Central"/>
</dbReference>
<dbReference type="GO" id="GO:0035725">
    <property type="term" value="P:sodium ion transmembrane transport"/>
    <property type="evidence" value="ECO:0000314"/>
    <property type="project" value="UniProtKB"/>
</dbReference>
<dbReference type="GO" id="GO:0006814">
    <property type="term" value="P:sodium ion transport"/>
    <property type="evidence" value="ECO:0000314"/>
    <property type="project" value="RGD"/>
</dbReference>
<dbReference type="Gene3D" id="6.10.140.1330">
    <property type="match status" value="1"/>
</dbReference>
<dbReference type="InterPro" id="IPR018422">
    <property type="entry name" value="Cation/H_exchanger_CPA1"/>
</dbReference>
<dbReference type="InterPro" id="IPR006153">
    <property type="entry name" value="Cation/H_exchanger_TM"/>
</dbReference>
<dbReference type="InterPro" id="IPR018410">
    <property type="entry name" value="Na/H_exchanger_3/5"/>
</dbReference>
<dbReference type="InterPro" id="IPR004709">
    <property type="entry name" value="NaH_exchanger"/>
</dbReference>
<dbReference type="NCBIfam" id="TIGR00840">
    <property type="entry name" value="b_cpa1"/>
    <property type="match status" value="1"/>
</dbReference>
<dbReference type="PANTHER" id="PTHR10110">
    <property type="entry name" value="SODIUM/HYDROGEN EXCHANGER"/>
    <property type="match status" value="1"/>
</dbReference>
<dbReference type="PANTHER" id="PTHR10110:SF56">
    <property type="entry name" value="SODIUM_HYDROGEN EXCHANGER 5"/>
    <property type="match status" value="1"/>
</dbReference>
<dbReference type="Pfam" id="PF00999">
    <property type="entry name" value="Na_H_Exchanger"/>
    <property type="match status" value="1"/>
</dbReference>
<dbReference type="PRINTS" id="PR01084">
    <property type="entry name" value="NAHEXCHNGR"/>
</dbReference>
<dbReference type="PRINTS" id="PR01087">
    <property type="entry name" value="NAHEXCHNGR3"/>
</dbReference>